<evidence type="ECO:0000250" key="1">
    <source>
        <dbReference type="UniProtKB" id="O13836"/>
    </source>
</evidence>
<evidence type="ECO:0000250" key="2">
    <source>
        <dbReference type="UniProtKB" id="O70348"/>
    </source>
</evidence>
<evidence type="ECO:0000250" key="3">
    <source>
        <dbReference type="UniProtKB" id="Q5AAT0"/>
    </source>
</evidence>
<evidence type="ECO:0000250" key="4">
    <source>
        <dbReference type="UniProtKB" id="Q6CPU0"/>
    </source>
</evidence>
<evidence type="ECO:0000256" key="5">
    <source>
        <dbReference type="SAM" id="MobiDB-lite"/>
    </source>
</evidence>
<evidence type="ECO:0000269" key="6">
    <source>
    </source>
</evidence>
<evidence type="ECO:0000269" key="7">
    <source>
    </source>
</evidence>
<evidence type="ECO:0000269" key="8">
    <source>
    </source>
</evidence>
<evidence type="ECO:0000305" key="9"/>
<sequence>MSTEQDAVLGLAKDLEGINLLTVPNLERGHQSKLCKEKTTSDSSSSRKPSQQRDNYRKRRPKLICIPYTSFLHTGMHNFLTKPPRDIFHESKEVALFTNGRAYTILRKDLIPNLKESIAELYESSLLEAKKRKVPYLGHDLFANIDEFVPMTISELDSVSPCFSYIENWILDNPGKDFKIGKKFTVVTTRHHIVDLTMHLFNRRNRQTSLIVTYMGAGLLSFCRNVKKDSQMSKEGIYSNDPNMKKICYSGFEFENWVTENSKVADLTGSKCPIFSLVESKLSEEIGLLIRCEMDAFNPVSETNTELKCFAPLSMHNSNHRRKLLKTWVQTGLLPNSDIMIGLRDSHSGQLLDIQWYSRDLLCKKFNHPGLPTNKKELNYNAQIAVEWCHYCIEAICKLVEANISDYSSTKPESFEIGIDTNNAIVITKLKTTPRNVELFGM</sequence>
<organism>
    <name type="scientific">Saccharomyces cerevisiae (strain ATCC 204508 / S288c)</name>
    <name type="common">Baker's yeast</name>
    <dbReference type="NCBI Taxonomy" id="559292"/>
    <lineage>
        <taxon>Eukaryota</taxon>
        <taxon>Fungi</taxon>
        <taxon>Dikarya</taxon>
        <taxon>Ascomycota</taxon>
        <taxon>Saccharomycotina</taxon>
        <taxon>Saccharomycetes</taxon>
        <taxon>Saccharomycetales</taxon>
        <taxon>Saccharomycetaceae</taxon>
        <taxon>Saccharomyces</taxon>
    </lineage>
</organism>
<reference key="1">
    <citation type="journal article" date="1997" name="Nature">
        <title>The nucleotide sequence of Saccharomyces cerevisiae chromosome IV.</title>
        <authorList>
            <person name="Jacq C."/>
            <person name="Alt-Moerbe J."/>
            <person name="Andre B."/>
            <person name="Arnold W."/>
            <person name="Bahr A."/>
            <person name="Ballesta J.P.G."/>
            <person name="Bargues M."/>
            <person name="Baron L."/>
            <person name="Becker A."/>
            <person name="Biteau N."/>
            <person name="Bloecker H."/>
            <person name="Blugeon C."/>
            <person name="Boskovic J."/>
            <person name="Brandt P."/>
            <person name="Brueckner M."/>
            <person name="Buitrago M.J."/>
            <person name="Coster F."/>
            <person name="Delaveau T."/>
            <person name="del Rey F."/>
            <person name="Dujon B."/>
            <person name="Eide L.G."/>
            <person name="Garcia-Cantalejo J.M."/>
            <person name="Goffeau A."/>
            <person name="Gomez-Peris A."/>
            <person name="Granotier C."/>
            <person name="Hanemann V."/>
            <person name="Hankeln T."/>
            <person name="Hoheisel J.D."/>
            <person name="Jaeger W."/>
            <person name="Jimenez A."/>
            <person name="Jonniaux J.-L."/>
            <person name="Kraemer C."/>
            <person name="Kuester H."/>
            <person name="Laamanen P."/>
            <person name="Legros Y."/>
            <person name="Louis E.J."/>
            <person name="Moeller-Rieker S."/>
            <person name="Monnet A."/>
            <person name="Moro M."/>
            <person name="Mueller-Auer S."/>
            <person name="Nussbaumer B."/>
            <person name="Paricio N."/>
            <person name="Paulin L."/>
            <person name="Perea J."/>
            <person name="Perez-Alonso M."/>
            <person name="Perez-Ortin J.E."/>
            <person name="Pohl T.M."/>
            <person name="Prydz H."/>
            <person name="Purnelle B."/>
            <person name="Rasmussen S.W."/>
            <person name="Remacha M.A."/>
            <person name="Revuelta J.L."/>
            <person name="Rieger M."/>
            <person name="Salom D."/>
            <person name="Saluz H.P."/>
            <person name="Saiz J.E."/>
            <person name="Saren A.-M."/>
            <person name="Schaefer M."/>
            <person name="Scharfe M."/>
            <person name="Schmidt E.R."/>
            <person name="Schneider C."/>
            <person name="Scholler P."/>
            <person name="Schwarz S."/>
            <person name="Soler-Mira A."/>
            <person name="Urrestarazu L.A."/>
            <person name="Verhasselt P."/>
            <person name="Vissers S."/>
            <person name="Voet M."/>
            <person name="Volckaert G."/>
            <person name="Wagner G."/>
            <person name="Wambutt R."/>
            <person name="Wedler E."/>
            <person name="Wedler H."/>
            <person name="Woelfl S."/>
            <person name="Harris D.E."/>
            <person name="Bowman S."/>
            <person name="Brown D."/>
            <person name="Churcher C.M."/>
            <person name="Connor R."/>
            <person name="Dedman K."/>
            <person name="Gentles S."/>
            <person name="Hamlin N."/>
            <person name="Hunt S."/>
            <person name="Jones L."/>
            <person name="McDonald S."/>
            <person name="Murphy L.D."/>
            <person name="Niblett D."/>
            <person name="Odell C."/>
            <person name="Oliver K."/>
            <person name="Rajandream M.A."/>
            <person name="Richards C."/>
            <person name="Shore L."/>
            <person name="Walsh S.V."/>
            <person name="Barrell B.G."/>
            <person name="Dietrich F.S."/>
            <person name="Mulligan J.T."/>
            <person name="Allen E."/>
            <person name="Araujo R."/>
            <person name="Aviles E."/>
            <person name="Berno A."/>
            <person name="Carpenter J."/>
            <person name="Chen E."/>
            <person name="Cherry J.M."/>
            <person name="Chung E."/>
            <person name="Duncan M."/>
            <person name="Hunicke-Smith S."/>
            <person name="Hyman R.W."/>
            <person name="Komp C."/>
            <person name="Lashkari D."/>
            <person name="Lew H."/>
            <person name="Lin D."/>
            <person name="Mosedale D."/>
            <person name="Nakahara K."/>
            <person name="Namath A."/>
            <person name="Oefner P."/>
            <person name="Oh C."/>
            <person name="Petel F.X."/>
            <person name="Roberts D."/>
            <person name="Schramm S."/>
            <person name="Schroeder M."/>
            <person name="Shogren T."/>
            <person name="Shroff N."/>
            <person name="Winant A."/>
            <person name="Yelton M.A."/>
            <person name="Botstein D."/>
            <person name="Davis R.W."/>
            <person name="Johnston M."/>
            <person name="Andrews S."/>
            <person name="Brinkman R."/>
            <person name="Cooper J."/>
            <person name="Ding H."/>
            <person name="Du Z."/>
            <person name="Favello A."/>
            <person name="Fulton L."/>
            <person name="Gattung S."/>
            <person name="Greco T."/>
            <person name="Hallsworth K."/>
            <person name="Hawkins J."/>
            <person name="Hillier L.W."/>
            <person name="Jier M."/>
            <person name="Johnson D."/>
            <person name="Johnston L."/>
            <person name="Kirsten J."/>
            <person name="Kucaba T."/>
            <person name="Langston Y."/>
            <person name="Latreille P."/>
            <person name="Le T."/>
            <person name="Mardis E."/>
            <person name="Menezes S."/>
            <person name="Miller N."/>
            <person name="Nhan M."/>
            <person name="Pauley A."/>
            <person name="Peluso D."/>
            <person name="Rifkin L."/>
            <person name="Riles L."/>
            <person name="Taich A."/>
            <person name="Trevaskis E."/>
            <person name="Vignati D."/>
            <person name="Wilcox L."/>
            <person name="Wohldman P."/>
            <person name="Vaudin M."/>
            <person name="Wilson R."/>
            <person name="Waterston R."/>
            <person name="Albermann K."/>
            <person name="Hani J."/>
            <person name="Heumann K."/>
            <person name="Kleine K."/>
            <person name="Mewes H.-W."/>
            <person name="Zollner A."/>
            <person name="Zaccaria P."/>
        </authorList>
    </citation>
    <scope>NUCLEOTIDE SEQUENCE [LARGE SCALE GENOMIC DNA]</scope>
    <source>
        <strain>ATCC 204508 / S288c</strain>
    </source>
</reference>
<reference key="2">
    <citation type="journal article" date="2014" name="G3 (Bethesda)">
        <title>The reference genome sequence of Saccharomyces cerevisiae: Then and now.</title>
        <authorList>
            <person name="Engel S.R."/>
            <person name="Dietrich F.S."/>
            <person name="Fisk D.G."/>
            <person name="Binkley G."/>
            <person name="Balakrishnan R."/>
            <person name="Costanzo M.C."/>
            <person name="Dwight S.S."/>
            <person name="Hitz B.C."/>
            <person name="Karra K."/>
            <person name="Nash R.S."/>
            <person name="Weng S."/>
            <person name="Wong E.D."/>
            <person name="Lloyd P."/>
            <person name="Skrzypek M.S."/>
            <person name="Miyasato S.R."/>
            <person name="Simison M."/>
            <person name="Cherry J.M."/>
        </authorList>
    </citation>
    <scope>GENOME REANNOTATION</scope>
    <source>
        <strain>ATCC 204508 / S288c</strain>
    </source>
</reference>
<reference key="3">
    <citation type="journal article" date="2003" name="Nature">
        <title>Global analysis of protein localization in budding yeast.</title>
        <authorList>
            <person name="Huh W.-K."/>
            <person name="Falvo J.V."/>
            <person name="Gerke L.C."/>
            <person name="Carroll A.S."/>
            <person name="Howson R.W."/>
            <person name="Weissman J.S."/>
            <person name="O'Shea E.K."/>
        </authorList>
    </citation>
    <scope>SUBCELLULAR LOCATION [LARGE SCALE ANALYSIS]</scope>
</reference>
<reference key="4">
    <citation type="journal article" date="2003" name="Nature">
        <title>Global analysis of protein expression in yeast.</title>
        <authorList>
            <person name="Ghaemmaghami S."/>
            <person name="Huh W.-K."/>
            <person name="Bower K."/>
            <person name="Howson R.W."/>
            <person name="Belle A."/>
            <person name="Dephoure N."/>
            <person name="O'Shea E.K."/>
            <person name="Weissman J.S."/>
        </authorList>
    </citation>
    <scope>LEVEL OF PROTEIN EXPRESSION [LARGE SCALE ANALYSIS]</scope>
</reference>
<reference key="5">
    <citation type="journal article" date="2012" name="Nat. Struct. Mol. Biol.">
        <title>Dxo1 is a new type of eukaryotic enzyme with both decapping and 5'-3' exoribonuclease activity.</title>
        <authorList>
            <person name="Chang J.H."/>
            <person name="Jiao X."/>
            <person name="Chiba K."/>
            <person name="Oh C."/>
            <person name="Martin C.E."/>
            <person name="Kiledjian M."/>
            <person name="Tong L."/>
        </authorList>
    </citation>
    <scope>FUNCTION</scope>
</reference>
<gene>
    <name type="primary">DXO1</name>
    <name type="ordered locus">YDR370C</name>
</gene>
<proteinExistence type="evidence at protein level"/>
<keyword id="KW-0963">Cytoplasm</keyword>
<keyword id="KW-0269">Exonuclease</keyword>
<keyword id="KW-0378">Hydrolase</keyword>
<keyword id="KW-0479">Metal-binding</keyword>
<keyword id="KW-0540">Nuclease</keyword>
<keyword id="KW-0547">Nucleotide-binding</keyword>
<keyword id="KW-1185">Reference proteome</keyword>
<keyword id="KW-0694">RNA-binding</keyword>
<name>DXO1_YEAST</name>
<feature type="chain" id="PRO_0000253847" description="Decapping and exoribonuclease protein 1">
    <location>
        <begin position="1"/>
        <end position="442"/>
    </location>
</feature>
<feature type="region of interest" description="Disordered" evidence="5">
    <location>
        <begin position="31"/>
        <end position="56"/>
    </location>
</feature>
<feature type="compositionally biased region" description="Basic and acidic residues" evidence="5">
    <location>
        <begin position="31"/>
        <end position="40"/>
    </location>
</feature>
<feature type="compositionally biased region" description="Low complexity" evidence="5">
    <location>
        <begin position="41"/>
        <end position="53"/>
    </location>
</feature>
<feature type="binding site" evidence="2">
    <location>
        <position position="101"/>
    </location>
    <ligand>
        <name>substrate</name>
    </ligand>
</feature>
<feature type="binding site" evidence="1">
    <location>
        <position position="255"/>
    </location>
    <ligand>
        <name>a divalent metal cation</name>
        <dbReference type="ChEBI" id="CHEBI:60240"/>
    </ligand>
</feature>
<feature type="binding site" evidence="2">
    <location>
        <position position="293"/>
    </location>
    <ligand>
        <name>substrate</name>
    </ligand>
</feature>
<feature type="binding site" evidence="1">
    <location>
        <position position="295"/>
    </location>
    <ligand>
        <name>a divalent metal cation</name>
        <dbReference type="ChEBI" id="CHEBI:60240"/>
    </ligand>
</feature>
<feature type="binding site" evidence="1">
    <location>
        <position position="306"/>
    </location>
    <ligand>
        <name>a divalent metal cation</name>
        <dbReference type="ChEBI" id="CHEBI:60240"/>
    </ligand>
</feature>
<feature type="binding site" evidence="1">
    <location>
        <position position="307"/>
    </location>
    <ligand>
        <name>a divalent metal cation</name>
        <dbReference type="ChEBI" id="CHEBI:60240"/>
    </ligand>
</feature>
<feature type="binding site" evidence="2">
    <location>
        <position position="308"/>
    </location>
    <ligand>
        <name>substrate</name>
    </ligand>
</feature>
<feature type="binding site" evidence="2">
    <location>
        <position position="330"/>
    </location>
    <ligand>
        <name>substrate</name>
    </ligand>
</feature>
<comment type="function">
    <text evidence="1 2 8">Decapping enzyme for NAD-capped RNAs: specifically hydrolyzes the nicotinamide adenine dinucleotide (NAD) cap from a subset of RNAs by removing the entire NAD moiety from the 5'-end of an NAD-capped RNA (By similarity). The NAD-cap is present at the 5'-end of some RNAs and snoRNAs. In contrast to the canonical 5'-end N7 methylguanosine (m7G) cap, the NAD cap promotes mRNA decay (By similarity). Also acts as a non-canonical decapping enzyme that removes the entire cap structure of m7G capped or incompletely capped RNAs (PubMed:22961381). Has decapping activity toward incomplete 5'-end m7G cap mRNAs such as unmethylated 5'-end-capped RNA (cap0), while it has no activity toward 2'-O-ribose methylated m7G cap (cap1) (PubMed:22961381). Also has 5'-3' exonuclease activity (PubMed:22961381).</text>
</comment>
<comment type="catalytic activity">
    <reaction evidence="1">
        <text>a 5'-end NAD(+)-phospho-ribonucleoside in mRNA + H2O = a 5'-end phospho-ribonucleoside in mRNA + NAD(+) + H(+)</text>
        <dbReference type="Rhea" id="RHEA:60880"/>
        <dbReference type="Rhea" id="RHEA-COMP:15692"/>
        <dbReference type="Rhea" id="RHEA-COMP:15698"/>
        <dbReference type="ChEBI" id="CHEBI:15377"/>
        <dbReference type="ChEBI" id="CHEBI:15378"/>
        <dbReference type="ChEBI" id="CHEBI:57540"/>
        <dbReference type="ChEBI" id="CHEBI:138282"/>
        <dbReference type="ChEBI" id="CHEBI:144029"/>
    </reaction>
    <physiologicalReaction direction="left-to-right" evidence="1">
        <dbReference type="Rhea" id="RHEA:60881"/>
    </physiologicalReaction>
</comment>
<comment type="catalytic activity">
    <reaction evidence="4">
        <text>a 5'-end (N(7)-methyl 5'-triphosphoguanosine)-ribonucleoside-ribonucleotide in mRNA + H2O = a (N(7)-methyl 5'-triphosphoguanosine)-nucleoside + a 5'-end phospho-ribonucleoside in mRNA + H(+)</text>
        <dbReference type="Rhea" id="RHEA:66928"/>
        <dbReference type="Rhea" id="RHEA-COMP:15692"/>
        <dbReference type="Rhea" id="RHEA-COMP:17313"/>
        <dbReference type="ChEBI" id="CHEBI:15377"/>
        <dbReference type="ChEBI" id="CHEBI:15378"/>
        <dbReference type="ChEBI" id="CHEBI:138282"/>
        <dbReference type="ChEBI" id="CHEBI:172876"/>
        <dbReference type="ChEBI" id="CHEBI:172877"/>
    </reaction>
    <physiologicalReaction direction="left-to-right" evidence="4">
        <dbReference type="Rhea" id="RHEA:66929"/>
    </physiologicalReaction>
</comment>
<comment type="cofactor">
    <cofactor evidence="3">
        <name>a divalent metal cation</name>
        <dbReference type="ChEBI" id="CHEBI:60240"/>
    </cofactor>
    <text evidence="3">Divalent metal cation.</text>
</comment>
<comment type="subcellular location">
    <subcellularLocation>
        <location evidence="6">Cytoplasm</location>
    </subcellularLocation>
</comment>
<comment type="miscellaneous">
    <text evidence="7">Present with 1040 molecules/cell in log phase SD medium.</text>
</comment>
<comment type="similarity">
    <text evidence="9">Belongs to the DXO/Dom3Z family.</text>
</comment>
<dbReference type="EC" id="3.6.1.-" evidence="8 1"/>
<dbReference type="EC" id="3.1.13.-" evidence="8"/>
<dbReference type="EMBL" id="U28373">
    <property type="protein sequence ID" value="AAB64806.1"/>
    <property type="molecule type" value="Genomic_DNA"/>
</dbReference>
<dbReference type="EMBL" id="BK006938">
    <property type="protein sequence ID" value="DAA12211.1"/>
    <property type="molecule type" value="Genomic_DNA"/>
</dbReference>
<dbReference type="PIR" id="S61165">
    <property type="entry name" value="S61165"/>
</dbReference>
<dbReference type="RefSeq" id="NP_010658.3">
    <property type="nucleotide sequence ID" value="NM_001180678.3"/>
</dbReference>
<dbReference type="SMR" id="Q06349"/>
<dbReference type="BioGRID" id="32429">
    <property type="interactions" value="15"/>
</dbReference>
<dbReference type="DIP" id="DIP-5250N"/>
<dbReference type="FunCoup" id="Q06349">
    <property type="interactions" value="61"/>
</dbReference>
<dbReference type="IntAct" id="Q06349">
    <property type="interactions" value="2"/>
</dbReference>
<dbReference type="STRING" id="4932.YDR370C"/>
<dbReference type="iPTMnet" id="Q06349"/>
<dbReference type="PaxDb" id="4932-YDR370C"/>
<dbReference type="PeptideAtlas" id="Q06349"/>
<dbReference type="EnsemblFungi" id="YDR370C_mRNA">
    <property type="protein sequence ID" value="YDR370C"/>
    <property type="gene ID" value="YDR370C"/>
</dbReference>
<dbReference type="GeneID" id="851976"/>
<dbReference type="KEGG" id="sce:YDR370C"/>
<dbReference type="AGR" id="SGD:S000002778"/>
<dbReference type="SGD" id="S000002778">
    <property type="gene designation" value="DXO1"/>
</dbReference>
<dbReference type="VEuPathDB" id="FungiDB:YDR370C"/>
<dbReference type="eggNOG" id="ENOG502RWNP">
    <property type="taxonomic scope" value="Eukaryota"/>
</dbReference>
<dbReference type="HOGENOM" id="CLU_696510_0_0_1"/>
<dbReference type="InParanoid" id="Q06349"/>
<dbReference type="OMA" id="CIRSICK"/>
<dbReference type="OrthoDB" id="5853397at2759"/>
<dbReference type="BioCyc" id="YEAST:G3O-29920-MONOMER"/>
<dbReference type="BioGRID-ORCS" id="851976">
    <property type="hits" value="0 hits in 10 CRISPR screens"/>
</dbReference>
<dbReference type="PRO" id="PR:Q06349"/>
<dbReference type="Proteomes" id="UP000002311">
    <property type="component" value="Chromosome IV"/>
</dbReference>
<dbReference type="RNAct" id="Q06349">
    <property type="molecule type" value="protein"/>
</dbReference>
<dbReference type="GO" id="GO:0005737">
    <property type="term" value="C:cytoplasm"/>
    <property type="evidence" value="ECO:0007005"/>
    <property type="project" value="SGD"/>
</dbReference>
<dbReference type="GO" id="GO:0005829">
    <property type="term" value="C:cytosol"/>
    <property type="evidence" value="ECO:0000318"/>
    <property type="project" value="GO_Central"/>
</dbReference>
<dbReference type="GO" id="GO:0005634">
    <property type="term" value="C:nucleus"/>
    <property type="evidence" value="ECO:0000318"/>
    <property type="project" value="GO_Central"/>
</dbReference>
<dbReference type="GO" id="GO:0004534">
    <property type="term" value="F:5'-3' RNA exonuclease activity"/>
    <property type="evidence" value="ECO:0000315"/>
    <property type="project" value="SGD"/>
</dbReference>
<dbReference type="GO" id="GO:0046872">
    <property type="term" value="F:metal ion binding"/>
    <property type="evidence" value="ECO:0007669"/>
    <property type="project" value="UniProtKB-KW"/>
</dbReference>
<dbReference type="GO" id="GO:0034353">
    <property type="term" value="F:mRNA 5'-diphosphatase activity"/>
    <property type="evidence" value="ECO:0000318"/>
    <property type="project" value="GO_Central"/>
</dbReference>
<dbReference type="GO" id="GO:0000166">
    <property type="term" value="F:nucleotide binding"/>
    <property type="evidence" value="ECO:0007669"/>
    <property type="project" value="UniProtKB-KW"/>
</dbReference>
<dbReference type="GO" id="GO:0003723">
    <property type="term" value="F:RNA binding"/>
    <property type="evidence" value="ECO:0007669"/>
    <property type="project" value="UniProtKB-KW"/>
</dbReference>
<dbReference type="GO" id="GO:0000470">
    <property type="term" value="P:maturation of LSU-rRNA"/>
    <property type="evidence" value="ECO:0000315"/>
    <property type="project" value="SGD"/>
</dbReference>
<dbReference type="GO" id="GO:0110155">
    <property type="term" value="P:NAD-cap decapping"/>
    <property type="evidence" value="ECO:0000314"/>
    <property type="project" value="SGD"/>
</dbReference>
<dbReference type="GO" id="GO:0000956">
    <property type="term" value="P:nuclear-transcribed mRNA catabolic process"/>
    <property type="evidence" value="ECO:0000318"/>
    <property type="project" value="GO_Central"/>
</dbReference>
<dbReference type="GO" id="GO:0070966">
    <property type="term" value="P:nuclear-transcribed mRNA catabolic process, no-go decay"/>
    <property type="evidence" value="ECO:0000316"/>
    <property type="project" value="SGD"/>
</dbReference>
<dbReference type="InterPro" id="IPR013961">
    <property type="entry name" value="RAI1"/>
</dbReference>
<dbReference type="InterPro" id="IPR039039">
    <property type="entry name" value="RAI1-like_fam"/>
</dbReference>
<dbReference type="PANTHER" id="PTHR12395:SF25">
    <property type="entry name" value="DECAPPING AND EXORIBONUCLEASE PROTEIN 1"/>
    <property type="match status" value="1"/>
</dbReference>
<dbReference type="PANTHER" id="PTHR12395">
    <property type="entry name" value="DOM-3 RELATED"/>
    <property type="match status" value="1"/>
</dbReference>
<dbReference type="Pfam" id="PF08652">
    <property type="entry name" value="RAI1"/>
    <property type="match status" value="1"/>
</dbReference>
<accession>Q06349</accession>
<accession>D6VT01</accession>
<protein>
    <recommendedName>
        <fullName evidence="9">Decapping and exoribonuclease protein 1</fullName>
        <ecNumber evidence="8">3.6.1.-</ecNumber>
    </recommendedName>
    <alternativeName>
        <fullName evidence="9">5'-3' exoribonuclease DXO1</fullName>
        <ecNumber evidence="8">3.1.13.-</ecNumber>
    </alternativeName>
    <alternativeName>
        <fullName evidence="9">NAD-capped RNA hydrolase DXO1</fullName>
        <shortName evidence="9">DeNADding enzyme DXO1</shortName>
        <ecNumber evidence="1">3.6.1.-</ecNumber>
    </alternativeName>
</protein>